<accession>Q57P83</accession>
<dbReference type="EMBL" id="AE017220">
    <property type="protein sequence ID" value="AAX65478.1"/>
    <property type="molecule type" value="Genomic_DNA"/>
</dbReference>
<dbReference type="RefSeq" id="WP_000769035.1">
    <property type="nucleotide sequence ID" value="NC_006905.1"/>
</dbReference>
<dbReference type="SMR" id="Q57P83"/>
<dbReference type="DrugCentral" id="Q57P83"/>
<dbReference type="KEGG" id="sec:SCH_1572"/>
<dbReference type="HOGENOM" id="CLU_058202_0_0_6"/>
<dbReference type="Proteomes" id="UP000000538">
    <property type="component" value="Chromosome"/>
</dbReference>
<dbReference type="GO" id="GO:0009279">
    <property type="term" value="C:cell outer membrane"/>
    <property type="evidence" value="ECO:0007669"/>
    <property type="project" value="UniProtKB-SubCell"/>
</dbReference>
<dbReference type="GO" id="GO:0046930">
    <property type="term" value="C:pore complex"/>
    <property type="evidence" value="ECO:0007669"/>
    <property type="project" value="UniProtKB-KW"/>
</dbReference>
<dbReference type="GO" id="GO:0015288">
    <property type="term" value="F:porin activity"/>
    <property type="evidence" value="ECO:0007669"/>
    <property type="project" value="UniProtKB-KW"/>
</dbReference>
<dbReference type="GO" id="GO:0034220">
    <property type="term" value="P:monoatomic ion transmembrane transport"/>
    <property type="evidence" value="ECO:0007669"/>
    <property type="project" value="InterPro"/>
</dbReference>
<dbReference type="CDD" id="cd00342">
    <property type="entry name" value="gram_neg_porins"/>
    <property type="match status" value="1"/>
</dbReference>
<dbReference type="Gene3D" id="2.40.160.10">
    <property type="entry name" value="Porin"/>
    <property type="match status" value="1"/>
</dbReference>
<dbReference type="InterPro" id="IPR050298">
    <property type="entry name" value="Gram-neg_bact_OMP"/>
</dbReference>
<dbReference type="InterPro" id="IPR033900">
    <property type="entry name" value="Gram_neg_porin_domain"/>
</dbReference>
<dbReference type="InterPro" id="IPR023614">
    <property type="entry name" value="Porin_dom_sf"/>
</dbReference>
<dbReference type="InterPro" id="IPR001897">
    <property type="entry name" value="Porin_gammaproteobac"/>
</dbReference>
<dbReference type="InterPro" id="IPR001702">
    <property type="entry name" value="Porin_Gram-ve"/>
</dbReference>
<dbReference type="InterPro" id="IPR013793">
    <property type="entry name" value="Porin_Gram-ve_CS"/>
</dbReference>
<dbReference type="NCBIfam" id="NF007841">
    <property type="entry name" value="PRK10554.1"/>
    <property type="match status" value="1"/>
</dbReference>
<dbReference type="PANTHER" id="PTHR34501:SF2">
    <property type="entry name" value="OUTER MEMBRANE PORIN F-RELATED"/>
    <property type="match status" value="1"/>
</dbReference>
<dbReference type="PANTHER" id="PTHR34501">
    <property type="entry name" value="PROTEIN YDDL-RELATED"/>
    <property type="match status" value="1"/>
</dbReference>
<dbReference type="Pfam" id="PF00267">
    <property type="entry name" value="Porin_1"/>
    <property type="match status" value="1"/>
</dbReference>
<dbReference type="PRINTS" id="PR00183">
    <property type="entry name" value="ECOLIPORIN"/>
</dbReference>
<dbReference type="PRINTS" id="PR00182">
    <property type="entry name" value="ECOLNEIPORIN"/>
</dbReference>
<dbReference type="SUPFAM" id="SSF56935">
    <property type="entry name" value="Porins"/>
    <property type="match status" value="1"/>
</dbReference>
<dbReference type="PROSITE" id="PS00576">
    <property type="entry name" value="GRAM_NEG_PORIN"/>
    <property type="match status" value="1"/>
</dbReference>
<proteinExistence type="inferred from homology"/>
<sequence length="362" mass="39680">MKLKLVAVAVTSLLAAGVVNAAEVYNKDGNKLDLYGKVHAQHYFSDDNGSDGDKTYARLGFKGETQINDQLTGFGQWEYEFKGNRTESQGADKDKTRLAFAGLKFADYGSFDYGRNYGVAYDIGAWTDVLPEFGGDTWTQTDVFMTGRTTGVATYRNTDFFGLVEGLNFAAQYQGKNDRDGAYESNGDGFGLSATYEYEGFGVGAAYAKSDRTNNQVKAASNLNAAGKNAEVWAAGLKYDANNIYLATTYSETLNMTTFGEDAAGDAFIANKTQNFEAVAQYQFDFGLRPSIAYLKSKGKNLGTYGDQDLVEYIDVGATYYFNKNMSTFVDYKINLLDDSDFTKAAKVSTDNIVAVGLNYQF</sequence>
<keyword id="KW-0998">Cell outer membrane</keyword>
<keyword id="KW-0406">Ion transport</keyword>
<keyword id="KW-0472">Membrane</keyword>
<keyword id="KW-0626">Porin</keyword>
<keyword id="KW-0732">Signal</keyword>
<keyword id="KW-0812">Transmembrane</keyword>
<keyword id="KW-1134">Transmembrane beta strand</keyword>
<keyword id="KW-0813">Transport</keyword>
<organism>
    <name type="scientific">Salmonella choleraesuis (strain SC-B67)</name>
    <dbReference type="NCBI Taxonomy" id="321314"/>
    <lineage>
        <taxon>Bacteria</taxon>
        <taxon>Pseudomonadati</taxon>
        <taxon>Pseudomonadota</taxon>
        <taxon>Gammaproteobacteria</taxon>
        <taxon>Enterobacterales</taxon>
        <taxon>Enterobacteriaceae</taxon>
        <taxon>Salmonella</taxon>
    </lineage>
</organism>
<evidence type="ECO:0000250" key="1"/>
<evidence type="ECO:0000255" key="2"/>
<evidence type="ECO:0000305" key="3"/>
<protein>
    <recommendedName>
        <fullName>Outer membrane porin protein OmpD</fullName>
    </recommendedName>
</protein>
<comment type="function">
    <text evidence="1">Forms pores that allow passive diffusion of small molecules across the outer membrane.</text>
</comment>
<comment type="subunit">
    <text evidence="1">Homotrimer.</text>
</comment>
<comment type="subcellular location">
    <subcellularLocation>
        <location evidence="1">Cell outer membrane</location>
        <topology evidence="1">Multi-pass membrane protein</topology>
    </subcellularLocation>
</comment>
<comment type="similarity">
    <text evidence="3">Belongs to the Gram-negative porin family.</text>
</comment>
<feature type="signal peptide" evidence="2">
    <location>
        <begin position="1"/>
        <end position="21"/>
    </location>
</feature>
<feature type="chain" id="PRO_0000321870" description="Outer membrane porin protein OmpD">
    <location>
        <begin position="22"/>
        <end position="362"/>
    </location>
</feature>
<name>OMPD_SALCH</name>
<gene>
    <name type="primary">ompD</name>
    <name type="ordered locus">SCH_1572</name>
</gene>
<reference key="1">
    <citation type="journal article" date="2005" name="Nucleic Acids Res.">
        <title>The genome sequence of Salmonella enterica serovar Choleraesuis, a highly invasive and resistant zoonotic pathogen.</title>
        <authorList>
            <person name="Chiu C.-H."/>
            <person name="Tang P."/>
            <person name="Chu C."/>
            <person name="Hu S."/>
            <person name="Bao Q."/>
            <person name="Yu J."/>
            <person name="Chou Y.-Y."/>
            <person name="Wang H.-S."/>
            <person name="Lee Y.-S."/>
        </authorList>
    </citation>
    <scope>NUCLEOTIDE SEQUENCE [LARGE SCALE GENOMIC DNA]</scope>
    <source>
        <strain>SC-B67</strain>
    </source>
</reference>